<feature type="signal peptide" evidence="2">
    <location>
        <begin position="1"/>
        <end position="16"/>
    </location>
</feature>
<feature type="propeptide" id="PRO_0000390745" description="Removed in mature form" evidence="1">
    <location>
        <begin position="18"/>
        <end position="203"/>
    </location>
</feature>
<feature type="chain" id="PRO_0000390746" description="Tripeptidyl-peptidase SED2">
    <location>
        <begin position="204"/>
        <end position="596"/>
    </location>
</feature>
<feature type="domain" description="Peptidase S53">
    <location>
        <begin position="210"/>
        <end position="596"/>
    </location>
</feature>
<feature type="active site" description="Charge relay system" evidence="1">
    <location>
        <position position="286"/>
    </location>
</feature>
<feature type="active site" description="Charge relay system" evidence="1">
    <location>
        <position position="290"/>
    </location>
</feature>
<feature type="active site" description="Charge relay system" evidence="1">
    <location>
        <position position="501"/>
    </location>
</feature>
<feature type="binding site" evidence="1">
    <location>
        <position position="543"/>
    </location>
    <ligand>
        <name>Ca(2+)</name>
        <dbReference type="ChEBI" id="CHEBI:29108"/>
    </ligand>
</feature>
<feature type="binding site" evidence="1">
    <location>
        <position position="544"/>
    </location>
    <ligand>
        <name>Ca(2+)</name>
        <dbReference type="ChEBI" id="CHEBI:29108"/>
    </ligand>
</feature>
<feature type="binding site" evidence="1">
    <location>
        <position position="576"/>
    </location>
    <ligand>
        <name>Ca(2+)</name>
        <dbReference type="ChEBI" id="CHEBI:29108"/>
    </ligand>
</feature>
<feature type="binding site" evidence="1">
    <location>
        <position position="578"/>
    </location>
    <ligand>
        <name>Ca(2+)</name>
        <dbReference type="ChEBI" id="CHEBI:29108"/>
    </ligand>
</feature>
<feature type="glycosylation site" description="N-linked (GlcNAc...) asparagine" evidence="2">
    <location>
        <position position="265"/>
    </location>
</feature>
<feature type="glycosylation site" description="N-linked (GlcNAc...) asparagine" evidence="2">
    <location>
        <position position="403"/>
    </location>
</feature>
<feature type="glycosylation site" description="N-linked (GlcNAc...) asparagine" evidence="2">
    <location>
        <position position="572"/>
    </location>
</feature>
<evidence type="ECO:0000250" key="1"/>
<evidence type="ECO:0000255" key="2"/>
<reference key="1">
    <citation type="journal article" date="2012" name="MBio">
        <title>Comparative genome analysis of Trichophyton rubrum and related dermatophytes reveals candidate genes involved in infection.</title>
        <authorList>
            <person name="Martinez D.A."/>
            <person name="Oliver B.G."/>
            <person name="Graeser Y."/>
            <person name="Goldberg J.M."/>
            <person name="Li W."/>
            <person name="Martinez-Rossi N.M."/>
            <person name="Monod M."/>
            <person name="Shelest E."/>
            <person name="Barton R.C."/>
            <person name="Birch E."/>
            <person name="Brakhage A.A."/>
            <person name="Chen Z."/>
            <person name="Gurr S.J."/>
            <person name="Heiman D."/>
            <person name="Heitman J."/>
            <person name="Kosti I."/>
            <person name="Rossi A."/>
            <person name="Saif S."/>
            <person name="Samalova M."/>
            <person name="Saunders C.W."/>
            <person name="Shea T."/>
            <person name="Summerbell R.C."/>
            <person name="Xu J."/>
            <person name="Young S."/>
            <person name="Zeng Q."/>
            <person name="Birren B.W."/>
            <person name="Cuomo C.A."/>
            <person name="White T.C."/>
        </authorList>
    </citation>
    <scope>NUCLEOTIDE SEQUENCE [LARGE SCALE GENOMIC DNA]</scope>
    <source>
        <strain>ATCC MYA-4605 / CBS 113480</strain>
    </source>
</reference>
<proteinExistence type="inferred from homology"/>
<organism>
    <name type="scientific">Arthroderma otae (strain ATCC MYA-4605 / CBS 113480)</name>
    <name type="common">Microsporum canis</name>
    <dbReference type="NCBI Taxonomy" id="554155"/>
    <lineage>
        <taxon>Eukaryota</taxon>
        <taxon>Fungi</taxon>
        <taxon>Dikarya</taxon>
        <taxon>Ascomycota</taxon>
        <taxon>Pezizomycotina</taxon>
        <taxon>Eurotiomycetes</taxon>
        <taxon>Eurotiomycetidae</taxon>
        <taxon>Onygenales</taxon>
        <taxon>Arthrodermataceae</taxon>
        <taxon>Microsporum</taxon>
    </lineage>
</organism>
<protein>
    <recommendedName>
        <fullName>Tripeptidyl-peptidase SED2</fullName>
        <ecNumber>3.4.14.10</ecNumber>
    </recommendedName>
    <alternativeName>
        <fullName>Sedolisin-B</fullName>
    </alternativeName>
</protein>
<dbReference type="EC" id="3.4.14.10"/>
<dbReference type="EMBL" id="DS995701">
    <property type="protein sequence ID" value="EEQ27296.1"/>
    <property type="molecule type" value="Genomic_DNA"/>
</dbReference>
<dbReference type="RefSeq" id="XP_002850080.1">
    <property type="nucleotide sequence ID" value="XM_002850034.1"/>
</dbReference>
<dbReference type="SMR" id="C5FBW2"/>
<dbReference type="STRING" id="554155.C5FBW2"/>
<dbReference type="GlyCosmos" id="C5FBW2">
    <property type="glycosylation" value="3 sites, No reported glycans"/>
</dbReference>
<dbReference type="GeneID" id="9230210"/>
<dbReference type="VEuPathDB" id="FungiDB:MCYG_00184"/>
<dbReference type="eggNOG" id="ENOG502QR6D">
    <property type="taxonomic scope" value="Eukaryota"/>
</dbReference>
<dbReference type="HOGENOM" id="CLU_013783_3_0_1"/>
<dbReference type="OMA" id="KATCDLF"/>
<dbReference type="OrthoDB" id="409122at2759"/>
<dbReference type="Proteomes" id="UP000002035">
    <property type="component" value="Unassembled WGS sequence"/>
</dbReference>
<dbReference type="GO" id="GO:0005576">
    <property type="term" value="C:extracellular region"/>
    <property type="evidence" value="ECO:0007669"/>
    <property type="project" value="UniProtKB-SubCell"/>
</dbReference>
<dbReference type="GO" id="GO:0046872">
    <property type="term" value="F:metal ion binding"/>
    <property type="evidence" value="ECO:0007669"/>
    <property type="project" value="UniProtKB-KW"/>
</dbReference>
<dbReference type="GO" id="GO:0004252">
    <property type="term" value="F:serine-type endopeptidase activity"/>
    <property type="evidence" value="ECO:0007669"/>
    <property type="project" value="InterPro"/>
</dbReference>
<dbReference type="GO" id="GO:0008240">
    <property type="term" value="F:tripeptidyl-peptidase activity"/>
    <property type="evidence" value="ECO:0007669"/>
    <property type="project" value="UniProtKB-EC"/>
</dbReference>
<dbReference type="GO" id="GO:0006508">
    <property type="term" value="P:proteolysis"/>
    <property type="evidence" value="ECO:0007669"/>
    <property type="project" value="UniProtKB-KW"/>
</dbReference>
<dbReference type="CDD" id="cd04056">
    <property type="entry name" value="Peptidases_S53"/>
    <property type="match status" value="1"/>
</dbReference>
<dbReference type="CDD" id="cd11377">
    <property type="entry name" value="Pro-peptidase_S53"/>
    <property type="match status" value="1"/>
</dbReference>
<dbReference type="FunFam" id="3.40.50.200:FF:000015">
    <property type="entry name" value="Tripeptidyl peptidase A"/>
    <property type="match status" value="1"/>
</dbReference>
<dbReference type="Gene3D" id="3.40.50.200">
    <property type="entry name" value="Peptidase S8/S53 domain"/>
    <property type="match status" value="1"/>
</dbReference>
<dbReference type="InterPro" id="IPR000209">
    <property type="entry name" value="Peptidase_S8/S53_dom"/>
</dbReference>
<dbReference type="InterPro" id="IPR036852">
    <property type="entry name" value="Peptidase_S8/S53_dom_sf"/>
</dbReference>
<dbReference type="InterPro" id="IPR023828">
    <property type="entry name" value="Peptidase_S8_Ser-AS"/>
</dbReference>
<dbReference type="InterPro" id="IPR015366">
    <property type="entry name" value="S53_propep"/>
</dbReference>
<dbReference type="InterPro" id="IPR030400">
    <property type="entry name" value="Sedolisin_dom"/>
</dbReference>
<dbReference type="InterPro" id="IPR050819">
    <property type="entry name" value="Tripeptidyl-peptidase_I"/>
</dbReference>
<dbReference type="PANTHER" id="PTHR14218">
    <property type="entry name" value="PROTEASE S8 TRIPEPTIDYL PEPTIDASE I CLN2"/>
    <property type="match status" value="1"/>
</dbReference>
<dbReference type="PANTHER" id="PTHR14218:SF32">
    <property type="entry name" value="TRIPEPTIDYL PEPTIDASE SED3 (AFU_ORTHOLOGUE AFUA_3G08930)"/>
    <property type="match status" value="1"/>
</dbReference>
<dbReference type="Pfam" id="PF00082">
    <property type="entry name" value="Peptidase_S8"/>
    <property type="match status" value="1"/>
</dbReference>
<dbReference type="Pfam" id="PF09286">
    <property type="entry name" value="Pro-kuma_activ"/>
    <property type="match status" value="1"/>
</dbReference>
<dbReference type="SMART" id="SM00944">
    <property type="entry name" value="Pro-kuma_activ"/>
    <property type="match status" value="1"/>
</dbReference>
<dbReference type="SUPFAM" id="SSF54897">
    <property type="entry name" value="Protease propeptides/inhibitors"/>
    <property type="match status" value="1"/>
</dbReference>
<dbReference type="SUPFAM" id="SSF52743">
    <property type="entry name" value="Subtilisin-like"/>
    <property type="match status" value="1"/>
</dbReference>
<dbReference type="PROSITE" id="PS51695">
    <property type="entry name" value="SEDOLISIN"/>
    <property type="match status" value="1"/>
</dbReference>
<keyword id="KW-0106">Calcium</keyword>
<keyword id="KW-0325">Glycoprotein</keyword>
<keyword id="KW-0378">Hydrolase</keyword>
<keyword id="KW-0479">Metal-binding</keyword>
<keyword id="KW-0645">Protease</keyword>
<keyword id="KW-1185">Reference proteome</keyword>
<keyword id="KW-0964">Secreted</keyword>
<keyword id="KW-0720">Serine protease</keyword>
<keyword id="KW-0732">Signal</keyword>
<keyword id="KW-0843">Virulence</keyword>
<keyword id="KW-0865">Zymogen</keyword>
<comment type="function">
    <text evidence="1">Secreted tripeptidyl-peptidase which degrades proteins at acidic pHs and is involved in virulence.</text>
</comment>
<comment type="catalytic activity">
    <reaction>
        <text>Release of an N-terminal tripeptide from a polypeptide.</text>
        <dbReference type="EC" id="3.4.14.10"/>
    </reaction>
</comment>
<comment type="cofactor">
    <cofactor evidence="1">
        <name>Ca(2+)</name>
        <dbReference type="ChEBI" id="CHEBI:29108"/>
    </cofactor>
    <text evidence="1">Binds 1 Ca(2+) ion per subunit.</text>
</comment>
<comment type="subcellular location">
    <subcellularLocation>
        <location evidence="1">Secreted</location>
        <location evidence="1">Extracellular space</location>
    </subcellularLocation>
</comment>
<gene>
    <name type="primary">SED2</name>
    <name type="ORF">MCYG_00184</name>
</gene>
<sequence>MLVLKFVCLLASVAAAKPTSWSSHKVVEHLESAPEGWRIVGAADPAAVIDFWLAIERENPEQLYDTIYDVSTPGRARYGKHLKREELDDLLRPRVETSEGIISWLTNGGVKPQGIRDEGDWIRFSTDVKTAEQLMKTQFHVFKDDVSSVSRIRTLEYSVPASISSHVQMIQPTTLFGRQKPQNSLILSPLTTDLEAMSEEEFSASNCRSLVTTACLRELYGLGDRVTQARDDNRIGVSGFLEEYAQYRDLDLFLSRFEPSAKGFNFSEGLIAGGKNTQGGPGSSTEANLDMQYVVGLSHKAKVTYYSTAGRGPLIPDLSQPDQASNDNEPYLEQLRYLVKLPKNQLPSVLSTSYGDTEQSLPASYTKATCDLFAQLGTMGVSVIFSSGDTGPGSSCQTNDGKNSTRFNPIYPASCPFVTSIGGTVGTEPERAVSFSSGGFSDRFPRPQYQDNAVKGYLKILGNQWSGLFNPNGRAFPDIAAQGSNYAVYDKGRMTGVSGTSASAPAMAAIIAQLNDFRLAKGSPVLGFLNPWIYSKGFSGFTDIVDGGSRGCTGYDIYSGLKAKRVPYASWNATKGWDPVTGFGTPNFQALTKVLP</sequence>
<name>SED2_ARTOC</name>
<accession>C5FBW2</accession>